<protein>
    <recommendedName>
        <fullName>TelA-like protein SAUSA300_1299</fullName>
    </recommendedName>
</protein>
<comment type="similarity">
    <text evidence="1">Belongs to the TelA family.</text>
</comment>
<reference key="1">
    <citation type="journal article" date="2006" name="Lancet">
        <title>Complete genome sequence of USA300, an epidemic clone of community-acquired meticillin-resistant Staphylococcus aureus.</title>
        <authorList>
            <person name="Diep B.A."/>
            <person name="Gill S.R."/>
            <person name="Chang R.F."/>
            <person name="Phan T.H."/>
            <person name="Chen J.H."/>
            <person name="Davidson M.G."/>
            <person name="Lin F."/>
            <person name="Lin J."/>
            <person name="Carleton H.A."/>
            <person name="Mongodin E.F."/>
            <person name="Sensabaugh G.F."/>
            <person name="Perdreau-Remington F."/>
        </authorList>
    </citation>
    <scope>NUCLEOTIDE SEQUENCE [LARGE SCALE GENOMIC DNA]</scope>
    <source>
        <strain>USA300</strain>
    </source>
</reference>
<name>TELL_STAA3</name>
<gene>
    <name type="ordered locus">SAUSA300_1299</name>
</gene>
<proteinExistence type="inferred from homology"/>
<sequence length="378" mass="43407">MTENKSFKESHPLDDFISDKELSNTTIQKEKLTIEQQKQVDTISKQINPLDNEGLLAFGSDLQKQMSQFSHQMLDEVQSKDVGPIGDTLSDLMSKLKSVNPNELNTDKPSMLKRIFSRAKSSINEIFSRMQSVSAQVDRITIQLQKHQTHLTRDIELLDTLYDKNKQYFDDLSLHIIAAQQKKLQLENEKLPQLQQQAQQSTNQMDIQQVADMQQFIDRLDKRIYDLQLSRQIALQTAPQIRMIQNVNQALAEKIQSSILTSIPLWKNQMAIALTLMRQRNAVAAQRAVTDTTNDLLTANAEMLKQNAIETATENERGIVDLDTLKRTQRNIIETIEETLIIQQHGREERQLAEKELQQLEQDLKSHLVNIKGPNKQS</sequence>
<evidence type="ECO:0000305" key="1"/>
<dbReference type="EMBL" id="CP000255">
    <property type="protein sequence ID" value="ABD21372.1"/>
    <property type="molecule type" value="Genomic_DNA"/>
</dbReference>
<dbReference type="RefSeq" id="WP_000138413.1">
    <property type="nucleotide sequence ID" value="NZ_CP027476.1"/>
</dbReference>
<dbReference type="SMR" id="Q2FH32"/>
<dbReference type="KEGG" id="saa:SAUSA300_1299"/>
<dbReference type="HOGENOM" id="CLU_032111_0_0_9"/>
<dbReference type="OMA" id="WKNQMVI"/>
<dbReference type="Proteomes" id="UP000001939">
    <property type="component" value="Chromosome"/>
</dbReference>
<dbReference type="InterPro" id="IPR008863">
    <property type="entry name" value="Toxic_anion-R_TelA"/>
</dbReference>
<dbReference type="PANTHER" id="PTHR38432">
    <property type="entry name" value="TELA-LIKE PROTEIN SAOUHSC_01408"/>
    <property type="match status" value="1"/>
</dbReference>
<dbReference type="PANTHER" id="PTHR38432:SF1">
    <property type="entry name" value="TELA-LIKE PROTEIN SAOUHSC_01408"/>
    <property type="match status" value="1"/>
</dbReference>
<dbReference type="Pfam" id="PF05816">
    <property type="entry name" value="TelA"/>
    <property type="match status" value="1"/>
</dbReference>
<dbReference type="PIRSF" id="PIRSF026508">
    <property type="entry name" value="TelA"/>
    <property type="match status" value="1"/>
</dbReference>
<organism>
    <name type="scientific">Staphylococcus aureus (strain USA300)</name>
    <dbReference type="NCBI Taxonomy" id="367830"/>
    <lineage>
        <taxon>Bacteria</taxon>
        <taxon>Bacillati</taxon>
        <taxon>Bacillota</taxon>
        <taxon>Bacilli</taxon>
        <taxon>Bacillales</taxon>
        <taxon>Staphylococcaceae</taxon>
        <taxon>Staphylococcus</taxon>
    </lineage>
</organism>
<feature type="chain" id="PRO_0000281404" description="TelA-like protein SAUSA300_1299">
    <location>
        <begin position="1"/>
        <end position="378"/>
    </location>
</feature>
<accession>Q2FH32</accession>